<gene>
    <name evidence="7" type="primary">Ift122</name>
    <name evidence="5" type="synonym">Wdr10</name>
</gene>
<organism>
    <name type="scientific">Mus musculus</name>
    <name type="common">Mouse</name>
    <dbReference type="NCBI Taxonomy" id="10090"/>
    <lineage>
        <taxon>Eukaryota</taxon>
        <taxon>Metazoa</taxon>
        <taxon>Chordata</taxon>
        <taxon>Craniata</taxon>
        <taxon>Vertebrata</taxon>
        <taxon>Euteleostomi</taxon>
        <taxon>Mammalia</taxon>
        <taxon>Eutheria</taxon>
        <taxon>Euarchontoglires</taxon>
        <taxon>Glires</taxon>
        <taxon>Rodentia</taxon>
        <taxon>Myomorpha</taxon>
        <taxon>Muroidea</taxon>
        <taxon>Muridae</taxon>
        <taxon>Murinae</taxon>
        <taxon>Mus</taxon>
        <taxon>Mus</taxon>
    </lineage>
</organism>
<comment type="function">
    <text evidence="1 2 3">As a component of the IFT complex A (IFT-A), a complex required for retrograde ciliary transport and entry into cilia of G protein-coupled receptors (GPCRs), it is required in ciliogenesis and ciliary protein trafficking (By similarity). Involved in cilia formation during neuronal patterning. Acts as a negative regulator of Shh signaling. Required to recruit TULP3 to primary cilia (PubMed:19000668, PubMed:21209331).</text>
</comment>
<comment type="subunit">
    <text evidence="1">Component of the IFT complex A (IFT-A) complex. IFT-A complex is divided into a core subcomplex composed of IFT122:IFT140:WDR19 which is associated with TULP3 and a peripheral subcomplex composed of IFT43:WDR35:TTC21B. Interacts with IFT43:WDR35; the interaction connects the 2 IFT-A subcomplexes. Interacts with IFTAP; the interaction associates IFTAP with IFT-A complex.</text>
</comment>
<comment type="subcellular location">
    <subcellularLocation>
        <location evidence="3">Cell projection</location>
        <location evidence="3">Cilium</location>
    </subcellularLocation>
    <subcellularLocation>
        <location evidence="3">Cytoplasm</location>
        <location evidence="3">Cytoskeleton</location>
        <location evidence="3">Cilium basal body</location>
    </subcellularLocation>
    <text evidence="3">Localizes to photoreceptor connecting cilia.</text>
</comment>
<comment type="alternative products">
    <event type="alternative splicing"/>
    <isoform>
        <id>Q6NWV3-1</id>
        <name>1</name>
        <sequence type="displayed"/>
    </isoform>
    <isoform>
        <id>Q6NWV3-2</id>
        <name>2</name>
        <sequence type="described" ref="VSP_039810"/>
    </isoform>
</comment>
<comment type="developmental stage">
    <text evidence="2">Expression at least from 7.5 dpc onwards throughout embryonic development with lower levels at 7.5 dpc and 9.5 dpc. Ubiquitously expressed at 11.5 dpc.</text>
</comment>
<comment type="domain">
    <text evidence="1">Forms the trimeric core subcomplex IFT122:IFT140:WDR19 via the C-terminal region, whereas it interacts with IFT43:WDR35 via the N-terminal region containing the WD repeats.</text>
</comment>
<comment type="disruption phenotype">
    <text evidence="2 3">Embryonic lethal (manifesting between 11.5 dpc and 13.5 dpc). Multiple developmental defects (exencephaly, situs viscerum inversus, delay in turning, hemorrhage and defects in limb development). In the node, primary cilia are absent or malformed in homozygous mutant and heterozygous embryos, respectively. The Shh signaling pathway is impaired in both neural tube patterning (expansion of motoneurons and rostro-caudal level-dependent contraction or expansion of the dorso-lateral interneurons) and limb patterning (ectrosyndactyly). The proteolytic processing of Gli3 is altered. Defects in Ift122 are the cause of the sister of open brain (sopb) phenotype, a mutant that induces embryonic lethality and generates primary cilia with features of defective retrograde intraflagellar transport.</text>
</comment>
<comment type="sequence caution" evidence="6">
    <conflict type="erroneous initiation">
        <sequence resource="EMBL-CDS" id="BAD21365"/>
    </conflict>
    <text>Extended N-terminus.</text>
</comment>
<proteinExistence type="evidence at protein level"/>
<accession>Q6NWV3</accession>
<accession>Q6KAU2</accession>
<accession>Q8C8U5</accession>
<accession>Q8CD77</accession>
<dbReference type="EMBL" id="AK131115">
    <property type="protein sequence ID" value="BAD21365.1"/>
    <property type="status" value="ALT_INIT"/>
    <property type="molecule type" value="mRNA"/>
</dbReference>
<dbReference type="EMBL" id="AK031308">
    <property type="protein sequence ID" value="BAC27340.1"/>
    <property type="molecule type" value="mRNA"/>
</dbReference>
<dbReference type="EMBL" id="AK044456">
    <property type="protein sequence ID" value="BAC31930.1"/>
    <property type="molecule type" value="mRNA"/>
</dbReference>
<dbReference type="EMBL" id="AK167330">
    <property type="protein sequence ID" value="BAE39432.1"/>
    <property type="molecule type" value="mRNA"/>
</dbReference>
<dbReference type="EMBL" id="AK167412">
    <property type="protein sequence ID" value="BAE39501.1"/>
    <property type="molecule type" value="mRNA"/>
</dbReference>
<dbReference type="EMBL" id="BC066083">
    <property type="protein sequence ID" value="AAH66083.1"/>
    <property type="molecule type" value="mRNA"/>
</dbReference>
<dbReference type="EMBL" id="BC067415">
    <property type="protein sequence ID" value="AAH67415.1"/>
    <property type="molecule type" value="mRNA"/>
</dbReference>
<dbReference type="CCDS" id="CCDS20445.1">
    <molecule id="Q6NWV3-2"/>
</dbReference>
<dbReference type="CCDS" id="CCDS51880.1">
    <molecule id="Q6NWV3-1"/>
</dbReference>
<dbReference type="RefSeq" id="NP_001161235.1">
    <molecule id="Q6NWV3-1"/>
    <property type="nucleotide sequence ID" value="NM_001167763.1"/>
</dbReference>
<dbReference type="RefSeq" id="NP_112454.2">
    <molecule id="Q6NWV3-2"/>
    <property type="nucleotide sequence ID" value="NM_031177.4"/>
</dbReference>
<dbReference type="SMR" id="Q6NWV3"/>
<dbReference type="BioGRID" id="219896">
    <property type="interactions" value="6"/>
</dbReference>
<dbReference type="ComplexPortal" id="CPX-5027">
    <property type="entry name" value="Intraflagellar transport complex A"/>
</dbReference>
<dbReference type="FunCoup" id="Q6NWV3">
    <property type="interactions" value="1258"/>
</dbReference>
<dbReference type="IntAct" id="Q6NWV3">
    <property type="interactions" value="1"/>
</dbReference>
<dbReference type="STRING" id="10090.ENSMUSP00000045468"/>
<dbReference type="iPTMnet" id="Q6NWV3"/>
<dbReference type="PhosphoSitePlus" id="Q6NWV3"/>
<dbReference type="SwissPalm" id="Q6NWV3"/>
<dbReference type="PaxDb" id="10090-ENSMUSP00000045468"/>
<dbReference type="ProteomicsDB" id="267256">
    <molecule id="Q6NWV3-1"/>
</dbReference>
<dbReference type="ProteomicsDB" id="267257">
    <molecule id="Q6NWV3-2"/>
</dbReference>
<dbReference type="Pumba" id="Q6NWV3"/>
<dbReference type="Antibodypedia" id="33252">
    <property type="antibodies" value="72 antibodies from 19 providers"/>
</dbReference>
<dbReference type="Ensembl" id="ENSMUST00000038234.13">
    <molecule id="Q6NWV3-2"/>
    <property type="protein sequence ID" value="ENSMUSP00000045468.7"/>
    <property type="gene ID" value="ENSMUSG00000030323.14"/>
</dbReference>
<dbReference type="Ensembl" id="ENSMUST00000112925.8">
    <molecule id="Q6NWV3-1"/>
    <property type="protein sequence ID" value="ENSMUSP00000108547.2"/>
    <property type="gene ID" value="ENSMUSG00000030323.14"/>
</dbReference>
<dbReference type="GeneID" id="81896"/>
<dbReference type="KEGG" id="mmu:81896"/>
<dbReference type="UCSC" id="uc009djg.2">
    <molecule id="Q6NWV3-2"/>
    <property type="organism name" value="mouse"/>
</dbReference>
<dbReference type="UCSC" id="uc009dji.2">
    <molecule id="Q6NWV3-1"/>
    <property type="organism name" value="mouse"/>
</dbReference>
<dbReference type="AGR" id="MGI:1932386"/>
<dbReference type="CTD" id="55764"/>
<dbReference type="MGI" id="MGI:1932386">
    <property type="gene designation" value="Ift122"/>
</dbReference>
<dbReference type="VEuPathDB" id="HostDB:ENSMUSG00000030323"/>
<dbReference type="eggNOG" id="KOG1538">
    <property type="taxonomic scope" value="Eukaryota"/>
</dbReference>
<dbReference type="GeneTree" id="ENSGT00390000001016"/>
<dbReference type="HOGENOM" id="CLU_008896_0_0_1"/>
<dbReference type="InParanoid" id="Q6NWV3"/>
<dbReference type="OMA" id="GDSFDTW"/>
<dbReference type="OrthoDB" id="10255582at2759"/>
<dbReference type="TreeFam" id="TF105855"/>
<dbReference type="Reactome" id="R-MMU-5610787">
    <property type="pathway name" value="Hedgehog 'off' state"/>
</dbReference>
<dbReference type="Reactome" id="R-MMU-5620924">
    <property type="pathway name" value="Intraflagellar transport"/>
</dbReference>
<dbReference type="BioGRID-ORCS" id="81896">
    <property type="hits" value="4 hits in 77 CRISPR screens"/>
</dbReference>
<dbReference type="ChiTaRS" id="Ift122">
    <property type="organism name" value="mouse"/>
</dbReference>
<dbReference type="PRO" id="PR:Q6NWV3"/>
<dbReference type="Proteomes" id="UP000000589">
    <property type="component" value="Chromosome 6"/>
</dbReference>
<dbReference type="RNAct" id="Q6NWV3">
    <property type="molecule type" value="protein"/>
</dbReference>
<dbReference type="Bgee" id="ENSMUSG00000030323">
    <property type="expression patterns" value="Expressed in spermatocyte and 218 other cell types or tissues"/>
</dbReference>
<dbReference type="ExpressionAtlas" id="Q6NWV3">
    <property type="expression patterns" value="baseline and differential"/>
</dbReference>
<dbReference type="GO" id="GO:0036064">
    <property type="term" value="C:ciliary basal body"/>
    <property type="evidence" value="ECO:0000314"/>
    <property type="project" value="BHF-UCL"/>
</dbReference>
<dbReference type="GO" id="GO:0097546">
    <property type="term" value="C:ciliary base"/>
    <property type="evidence" value="ECO:0000314"/>
    <property type="project" value="CACAO"/>
</dbReference>
<dbReference type="GO" id="GO:0005929">
    <property type="term" value="C:cilium"/>
    <property type="evidence" value="ECO:0000314"/>
    <property type="project" value="UniProtKB"/>
</dbReference>
<dbReference type="GO" id="GO:0005737">
    <property type="term" value="C:cytoplasm"/>
    <property type="evidence" value="ECO:0000314"/>
    <property type="project" value="BHF-UCL"/>
</dbReference>
<dbReference type="GO" id="GO:0030991">
    <property type="term" value="C:intraciliary transport particle A"/>
    <property type="evidence" value="ECO:0000314"/>
    <property type="project" value="MGI"/>
</dbReference>
<dbReference type="GO" id="GO:0032391">
    <property type="term" value="C:photoreceptor connecting cilium"/>
    <property type="evidence" value="ECO:0000314"/>
    <property type="project" value="UniProtKB"/>
</dbReference>
<dbReference type="GO" id="GO:0005886">
    <property type="term" value="C:plasma membrane"/>
    <property type="evidence" value="ECO:0007669"/>
    <property type="project" value="GOC"/>
</dbReference>
<dbReference type="GO" id="GO:0048593">
    <property type="term" value="P:camera-type eye morphogenesis"/>
    <property type="evidence" value="ECO:0000315"/>
    <property type="project" value="UniProtKB"/>
</dbReference>
<dbReference type="GO" id="GO:0060271">
    <property type="term" value="P:cilium assembly"/>
    <property type="evidence" value="ECO:0000315"/>
    <property type="project" value="UniProtKB"/>
</dbReference>
<dbReference type="GO" id="GO:0009953">
    <property type="term" value="P:dorsal/ventral pattern formation"/>
    <property type="evidence" value="ECO:0000315"/>
    <property type="project" value="MGI"/>
</dbReference>
<dbReference type="GO" id="GO:0010172">
    <property type="term" value="P:embryonic body morphogenesis"/>
    <property type="evidence" value="ECO:0000315"/>
    <property type="project" value="UniProtKB"/>
</dbReference>
<dbReference type="GO" id="GO:0048596">
    <property type="term" value="P:embryonic camera-type eye morphogenesis"/>
    <property type="evidence" value="ECO:0000315"/>
    <property type="project" value="MGI"/>
</dbReference>
<dbReference type="GO" id="GO:0042733">
    <property type="term" value="P:embryonic digit morphogenesis"/>
    <property type="evidence" value="ECO:0000315"/>
    <property type="project" value="MGI"/>
</dbReference>
<dbReference type="GO" id="GO:0035115">
    <property type="term" value="P:embryonic forelimb morphogenesis"/>
    <property type="evidence" value="ECO:0000315"/>
    <property type="project" value="BHF-UCL"/>
</dbReference>
<dbReference type="GO" id="GO:0035050">
    <property type="term" value="P:embryonic heart tube development"/>
    <property type="evidence" value="ECO:0000315"/>
    <property type="project" value="UniProtKB"/>
</dbReference>
<dbReference type="GO" id="GO:0060971">
    <property type="term" value="P:embryonic heart tube left/right pattern formation"/>
    <property type="evidence" value="ECO:0000315"/>
    <property type="project" value="CACAO"/>
</dbReference>
<dbReference type="GO" id="GO:0072594">
    <property type="term" value="P:establishment of protein localization to organelle"/>
    <property type="evidence" value="ECO:0000315"/>
    <property type="project" value="BHF-UCL"/>
</dbReference>
<dbReference type="GO" id="GO:0035556">
    <property type="term" value="P:intracellular signal transduction"/>
    <property type="evidence" value="ECO:0000315"/>
    <property type="project" value="BHF-UCL"/>
</dbReference>
<dbReference type="GO" id="GO:0035720">
    <property type="term" value="P:intraciliary anterograde transport"/>
    <property type="evidence" value="ECO:0000315"/>
    <property type="project" value="BHF-UCL"/>
</dbReference>
<dbReference type="GO" id="GO:0035721">
    <property type="term" value="P:intraciliary retrograde transport"/>
    <property type="evidence" value="ECO:0000315"/>
    <property type="project" value="UniProtKB"/>
</dbReference>
<dbReference type="GO" id="GO:0042073">
    <property type="term" value="P:intraciliary transport"/>
    <property type="evidence" value="ECO:0000250"/>
    <property type="project" value="UniProtKB"/>
</dbReference>
<dbReference type="GO" id="GO:0043616">
    <property type="term" value="P:keratinocyte proliferation"/>
    <property type="evidence" value="ECO:0000315"/>
    <property type="project" value="MGI"/>
</dbReference>
<dbReference type="GO" id="GO:0060173">
    <property type="term" value="P:limb development"/>
    <property type="evidence" value="ECO:0000315"/>
    <property type="project" value="UniProtKB"/>
</dbReference>
<dbReference type="GO" id="GO:0010839">
    <property type="term" value="P:negative regulation of keratinocyte proliferation"/>
    <property type="evidence" value="ECO:0000315"/>
    <property type="project" value="MGI"/>
</dbReference>
<dbReference type="GO" id="GO:0045879">
    <property type="term" value="P:negative regulation of smoothened signaling pathway"/>
    <property type="evidence" value="ECO:0000315"/>
    <property type="project" value="UniProtKB"/>
</dbReference>
<dbReference type="GO" id="GO:0001843">
    <property type="term" value="P:neural tube closure"/>
    <property type="evidence" value="ECO:0000315"/>
    <property type="project" value="UniProtKB"/>
</dbReference>
<dbReference type="GO" id="GO:1905515">
    <property type="term" value="P:non-motile cilium assembly"/>
    <property type="evidence" value="ECO:0000315"/>
    <property type="project" value="MGI"/>
</dbReference>
<dbReference type="GO" id="GO:0061512">
    <property type="term" value="P:protein localization to cilium"/>
    <property type="evidence" value="ECO:0000315"/>
    <property type="project" value="CACAO"/>
</dbReference>
<dbReference type="GO" id="GO:0043113">
    <property type="term" value="P:receptor clustering"/>
    <property type="evidence" value="ECO:0000316"/>
    <property type="project" value="MGI"/>
</dbReference>
<dbReference type="GO" id="GO:0060831">
    <property type="term" value="P:smoothened signaling pathway involved in dorsal/ventral neural tube patterning"/>
    <property type="evidence" value="ECO:0000316"/>
    <property type="project" value="MGI"/>
</dbReference>
<dbReference type="GO" id="GO:0021513">
    <property type="term" value="P:spinal cord dorsal/ventral patterning"/>
    <property type="evidence" value="ECO:0000315"/>
    <property type="project" value="BHF-UCL"/>
</dbReference>
<dbReference type="FunFam" id="1.25.40.470:FF:000005">
    <property type="entry name" value="Intraflagellar transport protein 122 homolog"/>
    <property type="match status" value="1"/>
</dbReference>
<dbReference type="FunFam" id="2.130.10.10:FF:000176">
    <property type="entry name" value="Intraflagellar transport protein 122 homolog"/>
    <property type="match status" value="1"/>
</dbReference>
<dbReference type="FunFam" id="1.25.40.470:FF:000003">
    <property type="entry name" value="intraflagellar transport protein 122 homolog"/>
    <property type="match status" value="1"/>
</dbReference>
<dbReference type="Gene3D" id="1.25.40.470">
    <property type="match status" value="2"/>
</dbReference>
<dbReference type="Gene3D" id="2.130.10.10">
    <property type="entry name" value="YVTN repeat-like/Quinoprotein amine dehydrogenase"/>
    <property type="match status" value="1"/>
</dbReference>
<dbReference type="InterPro" id="IPR056153">
    <property type="entry name" value="Beta-prop_IFT122_1st"/>
</dbReference>
<dbReference type="InterPro" id="IPR056152">
    <property type="entry name" value="Beta-prop_IFT122_2nd"/>
</dbReference>
<dbReference type="InterPro" id="IPR039857">
    <property type="entry name" value="Ift122/121"/>
</dbReference>
<dbReference type="InterPro" id="IPR015943">
    <property type="entry name" value="WD40/YVTN_repeat-like_dom_sf"/>
</dbReference>
<dbReference type="InterPro" id="IPR036322">
    <property type="entry name" value="WD40_repeat_dom_sf"/>
</dbReference>
<dbReference type="InterPro" id="IPR001680">
    <property type="entry name" value="WD40_rpt"/>
</dbReference>
<dbReference type="InterPro" id="IPR056838">
    <property type="entry name" value="Zn_ribbon_IFT122"/>
</dbReference>
<dbReference type="PANTHER" id="PTHR12764:SF4">
    <property type="entry name" value="INTRAFLAGELLAR TRANSPORT PROTEIN 122 HOMOLOG"/>
    <property type="match status" value="1"/>
</dbReference>
<dbReference type="PANTHER" id="PTHR12764">
    <property type="entry name" value="WD REPEAT DOMAIN-RELATED"/>
    <property type="match status" value="1"/>
</dbReference>
<dbReference type="Pfam" id="PF23381">
    <property type="entry name" value="Beta-prop_IFT122_1st"/>
    <property type="match status" value="2"/>
</dbReference>
<dbReference type="Pfam" id="PF23377">
    <property type="entry name" value="Beta-prop_IFT122_2nd"/>
    <property type="match status" value="1"/>
</dbReference>
<dbReference type="Pfam" id="PF25295">
    <property type="entry name" value="TPR_IFT122"/>
    <property type="match status" value="1"/>
</dbReference>
<dbReference type="Pfam" id="PF25144">
    <property type="entry name" value="Zn_ribbon_IFT122"/>
    <property type="match status" value="1"/>
</dbReference>
<dbReference type="Pfam" id="PF25143">
    <property type="entry name" value="Zn_ribbon_IFT122_C"/>
    <property type="match status" value="1"/>
</dbReference>
<dbReference type="SMART" id="SM00320">
    <property type="entry name" value="WD40"/>
    <property type="match status" value="8"/>
</dbReference>
<dbReference type="SUPFAM" id="SSF50978">
    <property type="entry name" value="WD40 repeat-like"/>
    <property type="match status" value="2"/>
</dbReference>
<dbReference type="PROSITE" id="PS50082">
    <property type="entry name" value="WD_REPEATS_2"/>
    <property type="match status" value="1"/>
</dbReference>
<dbReference type="PROSITE" id="PS50294">
    <property type="entry name" value="WD_REPEATS_REGION"/>
    <property type="match status" value="1"/>
</dbReference>
<reference key="1">
    <citation type="journal article" date="2004" name="DNA Res.">
        <title>Prediction of the coding sequences of mouse homologues of FLJ genes: the complete nucleotide sequences of 110 mouse FLJ-homologous cDNAs identified by screening of terminal sequences of cDNA clones randomly sampled from size-fractionated libraries.</title>
        <authorList>
            <person name="Okazaki N."/>
            <person name="Kikuno R."/>
            <person name="Ohara R."/>
            <person name="Inamoto S."/>
            <person name="Koseki H."/>
            <person name="Hiraoka S."/>
            <person name="Saga Y."/>
            <person name="Kitamura H."/>
            <person name="Nakagawa T."/>
            <person name="Nagase T."/>
            <person name="Ohara O."/>
            <person name="Koga H."/>
        </authorList>
    </citation>
    <scope>NUCLEOTIDE SEQUENCE [LARGE SCALE MRNA] (ISOFORM 1)</scope>
    <source>
        <strain>ICR</strain>
        <tissue>Fetal brain</tissue>
    </source>
</reference>
<reference key="2">
    <citation type="journal article" date="2005" name="Science">
        <title>The transcriptional landscape of the mammalian genome.</title>
        <authorList>
            <person name="Carninci P."/>
            <person name="Kasukawa T."/>
            <person name="Katayama S."/>
            <person name="Gough J."/>
            <person name="Frith M.C."/>
            <person name="Maeda N."/>
            <person name="Oyama R."/>
            <person name="Ravasi T."/>
            <person name="Lenhard B."/>
            <person name="Wells C."/>
            <person name="Kodzius R."/>
            <person name="Shimokawa K."/>
            <person name="Bajic V.B."/>
            <person name="Brenner S.E."/>
            <person name="Batalov S."/>
            <person name="Forrest A.R."/>
            <person name="Zavolan M."/>
            <person name="Davis M.J."/>
            <person name="Wilming L.G."/>
            <person name="Aidinis V."/>
            <person name="Allen J.E."/>
            <person name="Ambesi-Impiombato A."/>
            <person name="Apweiler R."/>
            <person name="Aturaliya R.N."/>
            <person name="Bailey T.L."/>
            <person name="Bansal M."/>
            <person name="Baxter L."/>
            <person name="Beisel K.W."/>
            <person name="Bersano T."/>
            <person name="Bono H."/>
            <person name="Chalk A.M."/>
            <person name="Chiu K.P."/>
            <person name="Choudhary V."/>
            <person name="Christoffels A."/>
            <person name="Clutterbuck D.R."/>
            <person name="Crowe M.L."/>
            <person name="Dalla E."/>
            <person name="Dalrymple B.P."/>
            <person name="de Bono B."/>
            <person name="Della Gatta G."/>
            <person name="di Bernardo D."/>
            <person name="Down T."/>
            <person name="Engstrom P."/>
            <person name="Fagiolini M."/>
            <person name="Faulkner G."/>
            <person name="Fletcher C.F."/>
            <person name="Fukushima T."/>
            <person name="Furuno M."/>
            <person name="Futaki S."/>
            <person name="Gariboldi M."/>
            <person name="Georgii-Hemming P."/>
            <person name="Gingeras T.R."/>
            <person name="Gojobori T."/>
            <person name="Green R.E."/>
            <person name="Gustincich S."/>
            <person name="Harbers M."/>
            <person name="Hayashi Y."/>
            <person name="Hensch T.K."/>
            <person name="Hirokawa N."/>
            <person name="Hill D."/>
            <person name="Huminiecki L."/>
            <person name="Iacono M."/>
            <person name="Ikeo K."/>
            <person name="Iwama A."/>
            <person name="Ishikawa T."/>
            <person name="Jakt M."/>
            <person name="Kanapin A."/>
            <person name="Katoh M."/>
            <person name="Kawasawa Y."/>
            <person name="Kelso J."/>
            <person name="Kitamura H."/>
            <person name="Kitano H."/>
            <person name="Kollias G."/>
            <person name="Krishnan S.P."/>
            <person name="Kruger A."/>
            <person name="Kummerfeld S.K."/>
            <person name="Kurochkin I.V."/>
            <person name="Lareau L.F."/>
            <person name="Lazarevic D."/>
            <person name="Lipovich L."/>
            <person name="Liu J."/>
            <person name="Liuni S."/>
            <person name="McWilliam S."/>
            <person name="Madan Babu M."/>
            <person name="Madera M."/>
            <person name="Marchionni L."/>
            <person name="Matsuda H."/>
            <person name="Matsuzawa S."/>
            <person name="Miki H."/>
            <person name="Mignone F."/>
            <person name="Miyake S."/>
            <person name="Morris K."/>
            <person name="Mottagui-Tabar S."/>
            <person name="Mulder N."/>
            <person name="Nakano N."/>
            <person name="Nakauchi H."/>
            <person name="Ng P."/>
            <person name="Nilsson R."/>
            <person name="Nishiguchi S."/>
            <person name="Nishikawa S."/>
            <person name="Nori F."/>
            <person name="Ohara O."/>
            <person name="Okazaki Y."/>
            <person name="Orlando V."/>
            <person name="Pang K.C."/>
            <person name="Pavan W.J."/>
            <person name="Pavesi G."/>
            <person name="Pesole G."/>
            <person name="Petrovsky N."/>
            <person name="Piazza S."/>
            <person name="Reed J."/>
            <person name="Reid J.F."/>
            <person name="Ring B.Z."/>
            <person name="Ringwald M."/>
            <person name="Rost B."/>
            <person name="Ruan Y."/>
            <person name="Salzberg S.L."/>
            <person name="Sandelin A."/>
            <person name="Schneider C."/>
            <person name="Schoenbach C."/>
            <person name="Sekiguchi K."/>
            <person name="Semple C.A."/>
            <person name="Seno S."/>
            <person name="Sessa L."/>
            <person name="Sheng Y."/>
            <person name="Shibata Y."/>
            <person name="Shimada H."/>
            <person name="Shimada K."/>
            <person name="Silva D."/>
            <person name="Sinclair B."/>
            <person name="Sperling S."/>
            <person name="Stupka E."/>
            <person name="Sugiura K."/>
            <person name="Sultana R."/>
            <person name="Takenaka Y."/>
            <person name="Taki K."/>
            <person name="Tammoja K."/>
            <person name="Tan S.L."/>
            <person name="Tang S."/>
            <person name="Taylor M.S."/>
            <person name="Tegner J."/>
            <person name="Teichmann S.A."/>
            <person name="Ueda H.R."/>
            <person name="van Nimwegen E."/>
            <person name="Verardo R."/>
            <person name="Wei C.L."/>
            <person name="Yagi K."/>
            <person name="Yamanishi H."/>
            <person name="Zabarovsky E."/>
            <person name="Zhu S."/>
            <person name="Zimmer A."/>
            <person name="Hide W."/>
            <person name="Bult C."/>
            <person name="Grimmond S.M."/>
            <person name="Teasdale R.D."/>
            <person name="Liu E.T."/>
            <person name="Brusic V."/>
            <person name="Quackenbush J."/>
            <person name="Wahlestedt C."/>
            <person name="Mattick J.S."/>
            <person name="Hume D.A."/>
            <person name="Kai C."/>
            <person name="Sasaki D."/>
            <person name="Tomaru Y."/>
            <person name="Fukuda S."/>
            <person name="Kanamori-Katayama M."/>
            <person name="Suzuki M."/>
            <person name="Aoki J."/>
            <person name="Arakawa T."/>
            <person name="Iida J."/>
            <person name="Imamura K."/>
            <person name="Itoh M."/>
            <person name="Kato T."/>
            <person name="Kawaji H."/>
            <person name="Kawagashira N."/>
            <person name="Kawashima T."/>
            <person name="Kojima M."/>
            <person name="Kondo S."/>
            <person name="Konno H."/>
            <person name="Nakano K."/>
            <person name="Ninomiya N."/>
            <person name="Nishio T."/>
            <person name="Okada M."/>
            <person name="Plessy C."/>
            <person name="Shibata K."/>
            <person name="Shiraki T."/>
            <person name="Suzuki S."/>
            <person name="Tagami M."/>
            <person name="Waki K."/>
            <person name="Watahiki A."/>
            <person name="Okamura-Oho Y."/>
            <person name="Suzuki H."/>
            <person name="Kawai J."/>
            <person name="Hayashizaki Y."/>
        </authorList>
    </citation>
    <scope>NUCLEOTIDE SEQUENCE [LARGE SCALE MRNA] (ISOFORMS 1 AND 2)</scope>
    <source>
        <strain>C57BL/6J</strain>
        <tissue>Amnion</tissue>
        <tissue>Placenta</tissue>
        <tissue>Retina</tissue>
        <tissue>Testis</tissue>
    </source>
</reference>
<reference key="3">
    <citation type="journal article" date="2004" name="Genome Res.">
        <title>The status, quality, and expansion of the NIH full-length cDNA project: the Mammalian Gene Collection (MGC).</title>
        <authorList>
            <consortium name="The MGC Project Team"/>
        </authorList>
    </citation>
    <scope>NUCLEOTIDE SEQUENCE [LARGE SCALE MRNA] (ISOFORM 1)</scope>
    <source>
        <strain>C3H/He</strain>
        <strain>C57BL/6J</strain>
        <tissue>Brain</tissue>
        <tissue>Mesenchymal stem cell</tissue>
    </source>
</reference>
<reference key="4">
    <citation type="journal article" date="2009" name="Hum. Mol. Genet.">
        <title>Essential role of nephrocystin in photoreceptor intraflagellar transport in mouse.</title>
        <authorList>
            <person name="Jiang S.T."/>
            <person name="Chiou Y.Y."/>
            <person name="Wang E."/>
            <person name="Chien Y.L."/>
            <person name="Ho H.H."/>
            <person name="Tsai F.J."/>
            <person name="Lin C.Y."/>
            <person name="Tsai S.P."/>
            <person name="Li H."/>
        </authorList>
    </citation>
    <scope>SUBCELLULAR LOCATION</scope>
</reference>
<reference key="5">
    <citation type="journal article" date="2009" name="Dev. Biol.">
        <title>Defective ciliogenesis, embryonic lethality and severe impairment of the Sonic Hedgehog pathway caused by inactivation of the mouse complex A intraflagellar transport gene Ift122/Wdr10, partially overlapping with the DNA repair gene Med1/Mbd4.</title>
        <authorList>
            <person name="Cortellino S."/>
            <person name="Wang C."/>
            <person name="Wang B."/>
            <person name="Bassi M.R."/>
            <person name="Caretti E."/>
            <person name="Champeval D."/>
            <person name="Calmont A."/>
            <person name="Jarnik M."/>
            <person name="Burch J."/>
            <person name="Zaret K.S."/>
            <person name="Larue L."/>
            <person name="Bellacosa A."/>
        </authorList>
    </citation>
    <scope>FUNCTION</scope>
    <scope>DEVELOPMENTAL STAGE</scope>
    <scope>DISRUPTION PHENOTYPE</scope>
</reference>
<reference key="6">
    <citation type="journal article" date="2010" name="Cell">
        <title>A tissue-specific atlas of mouse protein phosphorylation and expression.</title>
        <authorList>
            <person name="Huttlin E.L."/>
            <person name="Jedrychowski M.P."/>
            <person name="Elias J.E."/>
            <person name="Goswami T."/>
            <person name="Rad R."/>
            <person name="Beausoleil S.A."/>
            <person name="Villen J."/>
            <person name="Haas W."/>
            <person name="Sowa M.E."/>
            <person name="Gygi S.P."/>
        </authorList>
    </citation>
    <scope>IDENTIFICATION BY MASS SPECTROMETRY [LARGE SCALE ANALYSIS]</scope>
    <source>
        <tissue>Brain</tissue>
        <tissue>Kidney</tissue>
        <tissue>Lung</tissue>
        <tissue>Testis</tissue>
    </source>
</reference>
<reference key="7">
    <citation type="journal article" date="2011" name="Proc. Natl. Acad. Sci. U.S.A.">
        <title>Intraflagellar transport protein 122 antagonizes Sonic Hedgehog signaling and controls ciliary localization of pathway components.</title>
        <authorList>
            <person name="Qin J."/>
            <person name="Lin Y."/>
            <person name="Norman R.X."/>
            <person name="Ko H.W."/>
            <person name="Eggenschwiler J.T."/>
        </authorList>
    </citation>
    <scope>FUNCTION</scope>
    <scope>SUBCELLULAR LOCATION</scope>
    <scope>DISRUPTION PHENOTYPE</scope>
</reference>
<name>IF122_MOUSE</name>
<sequence length="1182" mass="134798">MRAVLTWRDKAEQCIYDLAFKPDGTQLILAAGNRLLVYDTSDGTLLQPLKGHKDTVYCVAYAKDGKRFASGSADKSIIIWTSKLEGILKYTHNDSIQCVSYNPVTHQLASCSSSDFGLWSPEQKSVSKHKSSSKITCCSWTNDGQYLALGMANGIISIRNKNGEEKVKIERPGGSLSPIWSICWNPSREEHNDILAVADWGQKLSFYQLSGKQIGKDRPLNFDPCCISYFTKGEYILVGGSDKQVSLFTKDGVRLGTVGEQNSWVWTCRVKPDSNYVVVGCQDGTISFYQLIFSTVHGLYKDRYAYRDSMTDVIVQHLITEQKVRIKCRELVKKIAIYKNRLAIQLPEKILIYELYSEDSTDMHYRVKEKIVKKFECNLLVVCADHIILCQEKRLQCLSFSGVKEREWQMESLIRYIKVIGGPAGREGLLVGLKNGQILKIFVDNLFAIVLLKQATAVRCLDMSASRNKLAVVDENDTCLVYDIHTKELLFQEPNANSVAWNTQCEDMLCFSGGGYLNIKASTFPVHQQKLQGFVVGYNGSKIFCLHVFSMSAVEVPQSAPMYQYLDRKMFKEAYQIACLGVTDADWRELAMEALEGLEFETARKAFTRVQDLRYLELISSIEERKKRGETNNDLFLADVFSYQGKFHEAAKLYKRSGHENLALDMYTDLCMFEYAKDFLGSGDPKETKMLITKQADWARNINEPKAAVEMYISAGEHAKAIEISGSHGWVDMLIDIARKLDKAEREPLLMCACYFKKLDSPGYAAETYLKIGDLKSLVQLYVDTKRWDEAFALGEKHPEFKDDVYVPYAQWLAENDRFEEAQKAFHKAGRQGEAVRVLEQLTHNAVVESRFNDAAYYYWMLSMQCLDMAQDPAQKDAMLDKFHHFQHLAELYHGYQTIHRYTEEPFSFDLPETLFNISKFLLHSLTKATPLGISKVNTLFTLAKQSKALGAYKLARHAYDKLRGLQIPARIQKSIELGTLTIRSKPFHDSEELVPLCYRCSTNNPLLNNLGNVCINCRQPFIFSASSYEVLHLVEFYLEEGITDEEAVALIDLEAPRHKREGKWRETSSNNSQTLKLDETMDSIGEDDPFTAKLSFEQGSSEFVPVVVNRSVLRSMSRRDVLIKRWPPPLQWQYFRSLLPDASITMCPSCFQMFHSEDYELLVLQHACCPYCRRRIDDTGP</sequence>
<keyword id="KW-0025">Alternative splicing</keyword>
<keyword id="KW-0966">Cell projection</keyword>
<keyword id="KW-0969">Cilium</keyword>
<keyword id="KW-0970">Cilium biogenesis/degradation</keyword>
<keyword id="KW-0963">Cytoplasm</keyword>
<keyword id="KW-0206">Cytoskeleton</keyword>
<keyword id="KW-0217">Developmental protein</keyword>
<keyword id="KW-1185">Reference proteome</keyword>
<keyword id="KW-0677">Repeat</keyword>
<keyword id="KW-0853">WD repeat</keyword>
<protein>
    <recommendedName>
        <fullName evidence="6">Intraflagellar transport protein 122 homolog</fullName>
    </recommendedName>
    <alternativeName>
        <fullName>WD repeat-containing protein 10</fullName>
    </alternativeName>
</protein>
<feature type="chain" id="PRO_0000398816" description="Intraflagellar transport protein 122 homolog">
    <location>
        <begin position="1"/>
        <end position="1182"/>
    </location>
</feature>
<feature type="repeat" description="WD 1">
    <location>
        <begin position="10"/>
        <end position="50"/>
    </location>
</feature>
<feature type="repeat" description="WD 2">
    <location>
        <begin position="51"/>
        <end position="91"/>
    </location>
</feature>
<feature type="repeat" description="WD 3">
    <location>
        <begin position="93"/>
        <end position="129"/>
    </location>
</feature>
<feature type="repeat" description="WD 4">
    <location>
        <begin position="131"/>
        <end position="169"/>
    </location>
</feature>
<feature type="repeat" description="WD 5">
    <location>
        <begin position="174"/>
        <end position="217"/>
    </location>
</feature>
<feature type="repeat" description="WD 6">
    <location>
        <begin position="219"/>
        <end position="258"/>
    </location>
</feature>
<feature type="repeat" description="WD 7">
    <location>
        <begin position="260"/>
        <end position="300"/>
    </location>
</feature>
<feature type="repeat" description="WD 8">
    <location>
        <begin position="453"/>
        <end position="492"/>
    </location>
</feature>
<feature type="splice variant" id="VSP_039810" description="In isoform 2." evidence="4">
    <original>Q</original>
    <variation>QA</variation>
    <location>
        <position position="871"/>
    </location>
</feature>
<feature type="sequence conflict" description="In Ref. 2; BAC31930." evidence="6" ref="2">
    <original>A</original>
    <variation>G</variation>
    <location>
        <position position="19"/>
    </location>
</feature>
<feature type="sequence conflict" description="In Ref. 2; BAC27340." evidence="6" ref="2">
    <original>S</original>
    <variation>T</variation>
    <location>
        <position position="139"/>
    </location>
</feature>
<feature type="sequence conflict" description="In Ref. 2; BAC27340." evidence="6" ref="2">
    <original>H</original>
    <variation>Q</variation>
    <location>
        <position position="297"/>
    </location>
</feature>
<feature type="sequence conflict" description="In Ref. 1; BAD21365." evidence="6" ref="1">
    <original>A</original>
    <variation>V</variation>
    <location>
        <position position="663"/>
    </location>
</feature>
<feature type="sequence conflict" description="In Ref. 2; BAC31930." evidence="6" ref="2">
    <original>T</original>
    <variation>A</variation>
    <location>
        <position position="768"/>
    </location>
</feature>
<feature type="sequence conflict" description="In Ref. 2; BAC31930." evidence="6" ref="2">
    <original>K</original>
    <variation>R</variation>
    <location>
        <position position="776"/>
    </location>
</feature>
<evidence type="ECO:0000250" key="1">
    <source>
        <dbReference type="UniProtKB" id="Q9HBG6"/>
    </source>
</evidence>
<evidence type="ECO:0000269" key="2">
    <source>
    </source>
</evidence>
<evidence type="ECO:0000269" key="3">
    <source>
    </source>
</evidence>
<evidence type="ECO:0000303" key="4">
    <source>
    </source>
</evidence>
<evidence type="ECO:0000303" key="5">
    <source>
    </source>
</evidence>
<evidence type="ECO:0000305" key="6"/>
<evidence type="ECO:0000312" key="7">
    <source>
        <dbReference type="MGI" id="MGI:1932386"/>
    </source>
</evidence>